<feature type="chain" id="PRO_1000088760" description="Aspartate carbamoyltransferase catalytic subunit">
    <location>
        <begin position="1"/>
        <end position="311"/>
    </location>
</feature>
<feature type="binding site" evidence="1">
    <location>
        <position position="55"/>
    </location>
    <ligand>
        <name>carbamoyl phosphate</name>
        <dbReference type="ChEBI" id="CHEBI:58228"/>
    </ligand>
</feature>
<feature type="binding site" evidence="1">
    <location>
        <position position="56"/>
    </location>
    <ligand>
        <name>carbamoyl phosphate</name>
        <dbReference type="ChEBI" id="CHEBI:58228"/>
    </ligand>
</feature>
<feature type="binding site" evidence="1">
    <location>
        <position position="85"/>
    </location>
    <ligand>
        <name>L-aspartate</name>
        <dbReference type="ChEBI" id="CHEBI:29991"/>
    </ligand>
</feature>
<feature type="binding site" evidence="1">
    <location>
        <position position="106"/>
    </location>
    <ligand>
        <name>carbamoyl phosphate</name>
        <dbReference type="ChEBI" id="CHEBI:58228"/>
    </ligand>
</feature>
<feature type="binding site" evidence="1">
    <location>
        <position position="135"/>
    </location>
    <ligand>
        <name>carbamoyl phosphate</name>
        <dbReference type="ChEBI" id="CHEBI:58228"/>
    </ligand>
</feature>
<feature type="binding site" evidence="1">
    <location>
        <position position="138"/>
    </location>
    <ligand>
        <name>carbamoyl phosphate</name>
        <dbReference type="ChEBI" id="CHEBI:58228"/>
    </ligand>
</feature>
<feature type="binding site" evidence="1">
    <location>
        <position position="168"/>
    </location>
    <ligand>
        <name>L-aspartate</name>
        <dbReference type="ChEBI" id="CHEBI:29991"/>
    </ligand>
</feature>
<feature type="binding site" evidence="1">
    <location>
        <position position="230"/>
    </location>
    <ligand>
        <name>L-aspartate</name>
        <dbReference type="ChEBI" id="CHEBI:29991"/>
    </ligand>
</feature>
<feature type="binding site" evidence="1">
    <location>
        <position position="268"/>
    </location>
    <ligand>
        <name>carbamoyl phosphate</name>
        <dbReference type="ChEBI" id="CHEBI:58228"/>
    </ligand>
</feature>
<feature type="binding site" evidence="1">
    <location>
        <position position="269"/>
    </location>
    <ligand>
        <name>carbamoyl phosphate</name>
        <dbReference type="ChEBI" id="CHEBI:58228"/>
    </ligand>
</feature>
<sequence>MANPLYQKHIISINDLSRDDLNLVLATAAKLKANPQPELLKHKVIASCFFEASTRTRLSFETSMHRLGASVVGFSDSANTSLGKKGETLADTISVISTYVDAIVMRHPQEGAARLATEFSGNVPVLNAGDGSNQHPTQTLLDLFTIQETQGRLDNLHVAMVGDLKYGRTVHSLTQALAKFDGNRFYFIAPDALAMPQYILDMLDEKGIAWSLHSSIEEVMAEVDILYMTRVQKERLDPSEYANVKAQFVLRASDLHNAKANMKVLHPLPRVDEIATDVDKTPHAWYFQQAGNGIFARQALLALVLNRDLVL</sequence>
<keyword id="KW-0665">Pyrimidine biosynthesis</keyword>
<keyword id="KW-0808">Transferase</keyword>
<organism>
    <name type="scientific">Escherichia coli O157:H7 (strain EC4115 / EHEC)</name>
    <dbReference type="NCBI Taxonomy" id="444450"/>
    <lineage>
        <taxon>Bacteria</taxon>
        <taxon>Pseudomonadati</taxon>
        <taxon>Pseudomonadota</taxon>
        <taxon>Gammaproteobacteria</taxon>
        <taxon>Enterobacterales</taxon>
        <taxon>Enterobacteriaceae</taxon>
        <taxon>Escherichia</taxon>
    </lineage>
</organism>
<reference key="1">
    <citation type="journal article" date="2011" name="Proc. Natl. Acad. Sci. U.S.A.">
        <title>Genomic anatomy of Escherichia coli O157:H7 outbreaks.</title>
        <authorList>
            <person name="Eppinger M."/>
            <person name="Mammel M.K."/>
            <person name="Leclerc J.E."/>
            <person name="Ravel J."/>
            <person name="Cebula T.A."/>
        </authorList>
    </citation>
    <scope>NUCLEOTIDE SEQUENCE [LARGE SCALE GENOMIC DNA]</scope>
    <source>
        <strain>EC4115 / EHEC</strain>
    </source>
</reference>
<proteinExistence type="inferred from homology"/>
<dbReference type="EC" id="2.1.3.2" evidence="1"/>
<dbReference type="EMBL" id="CP001164">
    <property type="protein sequence ID" value="ACI37324.1"/>
    <property type="molecule type" value="Genomic_DNA"/>
</dbReference>
<dbReference type="RefSeq" id="WP_000013046.1">
    <property type="nucleotide sequence ID" value="NC_011353.1"/>
</dbReference>
<dbReference type="SMR" id="B5Z3K3"/>
<dbReference type="GeneID" id="93777579"/>
<dbReference type="KEGG" id="ecf:ECH74115_5767"/>
<dbReference type="HOGENOM" id="CLU_043846_1_2_6"/>
<dbReference type="UniPathway" id="UPA00070">
    <property type="reaction ID" value="UER00116"/>
</dbReference>
<dbReference type="GO" id="GO:0005829">
    <property type="term" value="C:cytosol"/>
    <property type="evidence" value="ECO:0007669"/>
    <property type="project" value="TreeGrafter"/>
</dbReference>
<dbReference type="GO" id="GO:0016597">
    <property type="term" value="F:amino acid binding"/>
    <property type="evidence" value="ECO:0007669"/>
    <property type="project" value="InterPro"/>
</dbReference>
<dbReference type="GO" id="GO:0004070">
    <property type="term" value="F:aspartate carbamoyltransferase activity"/>
    <property type="evidence" value="ECO:0007669"/>
    <property type="project" value="UniProtKB-UniRule"/>
</dbReference>
<dbReference type="GO" id="GO:0006207">
    <property type="term" value="P:'de novo' pyrimidine nucleobase biosynthetic process"/>
    <property type="evidence" value="ECO:0007669"/>
    <property type="project" value="InterPro"/>
</dbReference>
<dbReference type="GO" id="GO:0044205">
    <property type="term" value="P:'de novo' UMP biosynthetic process"/>
    <property type="evidence" value="ECO:0007669"/>
    <property type="project" value="UniProtKB-UniRule"/>
</dbReference>
<dbReference type="GO" id="GO:0006520">
    <property type="term" value="P:amino acid metabolic process"/>
    <property type="evidence" value="ECO:0007669"/>
    <property type="project" value="InterPro"/>
</dbReference>
<dbReference type="FunFam" id="3.40.50.1370:FF:000001">
    <property type="entry name" value="Aspartate carbamoyltransferase"/>
    <property type="match status" value="1"/>
</dbReference>
<dbReference type="FunFam" id="3.40.50.1370:FF:000002">
    <property type="entry name" value="Aspartate carbamoyltransferase 2"/>
    <property type="match status" value="1"/>
</dbReference>
<dbReference type="Gene3D" id="3.40.50.1370">
    <property type="entry name" value="Aspartate/ornithine carbamoyltransferase"/>
    <property type="match status" value="2"/>
</dbReference>
<dbReference type="HAMAP" id="MF_00001">
    <property type="entry name" value="Asp_carb_tr"/>
    <property type="match status" value="1"/>
</dbReference>
<dbReference type="InterPro" id="IPR006132">
    <property type="entry name" value="Asp/Orn_carbamoyltranf_P-bd"/>
</dbReference>
<dbReference type="InterPro" id="IPR006130">
    <property type="entry name" value="Asp/Orn_carbamoylTrfase"/>
</dbReference>
<dbReference type="InterPro" id="IPR036901">
    <property type="entry name" value="Asp/Orn_carbamoylTrfase_sf"/>
</dbReference>
<dbReference type="InterPro" id="IPR002082">
    <property type="entry name" value="Asp_carbamoyltransf"/>
</dbReference>
<dbReference type="InterPro" id="IPR006131">
    <property type="entry name" value="Asp_carbamoyltransf_Asp/Orn-bd"/>
</dbReference>
<dbReference type="NCBIfam" id="TIGR00670">
    <property type="entry name" value="asp_carb_tr"/>
    <property type="match status" value="1"/>
</dbReference>
<dbReference type="NCBIfam" id="NF002032">
    <property type="entry name" value="PRK00856.1"/>
    <property type="match status" value="1"/>
</dbReference>
<dbReference type="PANTHER" id="PTHR45753:SF6">
    <property type="entry name" value="ASPARTATE CARBAMOYLTRANSFERASE"/>
    <property type="match status" value="1"/>
</dbReference>
<dbReference type="PANTHER" id="PTHR45753">
    <property type="entry name" value="ORNITHINE CARBAMOYLTRANSFERASE, MITOCHONDRIAL"/>
    <property type="match status" value="1"/>
</dbReference>
<dbReference type="Pfam" id="PF00185">
    <property type="entry name" value="OTCace"/>
    <property type="match status" value="1"/>
</dbReference>
<dbReference type="Pfam" id="PF02729">
    <property type="entry name" value="OTCace_N"/>
    <property type="match status" value="1"/>
</dbReference>
<dbReference type="PRINTS" id="PR00100">
    <property type="entry name" value="AOTCASE"/>
</dbReference>
<dbReference type="PRINTS" id="PR00101">
    <property type="entry name" value="ATCASE"/>
</dbReference>
<dbReference type="SUPFAM" id="SSF53671">
    <property type="entry name" value="Aspartate/ornithine carbamoyltransferase"/>
    <property type="match status" value="1"/>
</dbReference>
<dbReference type="PROSITE" id="PS00097">
    <property type="entry name" value="CARBAMOYLTRANSFERASE"/>
    <property type="match status" value="1"/>
</dbReference>
<gene>
    <name evidence="1" type="primary">pyrB</name>
    <name type="ordered locus">ECH74115_5767</name>
</gene>
<accession>B5Z3K3</accession>
<evidence type="ECO:0000255" key="1">
    <source>
        <dbReference type="HAMAP-Rule" id="MF_00001"/>
    </source>
</evidence>
<comment type="function">
    <text evidence="1">Catalyzes the condensation of carbamoyl phosphate and aspartate to form carbamoyl aspartate and inorganic phosphate, the committed step in the de novo pyrimidine nucleotide biosynthesis pathway.</text>
</comment>
<comment type="catalytic activity">
    <reaction evidence="1">
        <text>carbamoyl phosphate + L-aspartate = N-carbamoyl-L-aspartate + phosphate + H(+)</text>
        <dbReference type="Rhea" id="RHEA:20013"/>
        <dbReference type="ChEBI" id="CHEBI:15378"/>
        <dbReference type="ChEBI" id="CHEBI:29991"/>
        <dbReference type="ChEBI" id="CHEBI:32814"/>
        <dbReference type="ChEBI" id="CHEBI:43474"/>
        <dbReference type="ChEBI" id="CHEBI:58228"/>
        <dbReference type="EC" id="2.1.3.2"/>
    </reaction>
</comment>
<comment type="pathway">
    <text evidence="1">Pyrimidine metabolism; UMP biosynthesis via de novo pathway; (S)-dihydroorotate from bicarbonate: step 2/3.</text>
</comment>
<comment type="subunit">
    <text evidence="1">Heterododecamer (2C3:3R2) of six catalytic PyrB chains organized as two trimers (C3), and six regulatory PyrI chains organized as three dimers (R2).</text>
</comment>
<comment type="similarity">
    <text evidence="1">Belongs to the aspartate/ornithine carbamoyltransferase superfamily. ATCase family.</text>
</comment>
<protein>
    <recommendedName>
        <fullName evidence="1">Aspartate carbamoyltransferase catalytic subunit</fullName>
        <ecNumber evidence="1">2.1.3.2</ecNumber>
    </recommendedName>
    <alternativeName>
        <fullName evidence="1">Aspartate transcarbamylase</fullName>
        <shortName evidence="1">ATCase</shortName>
    </alternativeName>
</protein>
<name>PYRB_ECO5E</name>